<reference key="1">
    <citation type="journal article" date="2007" name="Mol. Phylogenet. Evol.">
        <title>Phylogenetic and evolutionary implications of complete chloroplast genome sequences of four early-diverging angiosperms: Buxus (Buxaceae), Chloranthus (Chloranthaceae), Dioscorea (Dioscoreaceae), and Illicium (Schisandraceae).</title>
        <authorList>
            <person name="Hansen D.R."/>
            <person name="Dastidar S.G."/>
            <person name="Cai Z."/>
            <person name="Penaflor C."/>
            <person name="Kuehl J.V."/>
            <person name="Boore J.L."/>
            <person name="Jansen R.K."/>
        </authorList>
    </citation>
    <scope>NUCLEOTIDE SEQUENCE [LARGE SCALE GENOMIC DNA]</scope>
</reference>
<organism>
    <name type="scientific">Dioscorea elephantipes</name>
    <name type="common">Elephant's foot yam</name>
    <name type="synonym">Testudinaria elephantipes</name>
    <dbReference type="NCBI Taxonomy" id="145284"/>
    <lineage>
        <taxon>Eukaryota</taxon>
        <taxon>Viridiplantae</taxon>
        <taxon>Streptophyta</taxon>
        <taxon>Embryophyta</taxon>
        <taxon>Tracheophyta</taxon>
        <taxon>Spermatophyta</taxon>
        <taxon>Magnoliopsida</taxon>
        <taxon>Liliopsida</taxon>
        <taxon>Dioscoreales</taxon>
        <taxon>Dioscoreaceae</taxon>
        <taxon>Dioscorea</taxon>
    </lineage>
</organism>
<dbReference type="EC" id="1.10.3.9" evidence="2"/>
<dbReference type="EMBL" id="EF380353">
    <property type="protein sequence ID" value="ABR01425.1"/>
    <property type="molecule type" value="Genomic_DNA"/>
</dbReference>
<dbReference type="RefSeq" id="YP_001294347.1">
    <property type="nucleotide sequence ID" value="NC_009601.1"/>
</dbReference>
<dbReference type="SMR" id="A6MMK2"/>
<dbReference type="GeneID" id="5236629"/>
<dbReference type="GO" id="GO:0009535">
    <property type="term" value="C:chloroplast thylakoid membrane"/>
    <property type="evidence" value="ECO:0007669"/>
    <property type="project" value="UniProtKB-SubCell"/>
</dbReference>
<dbReference type="GO" id="GO:0009523">
    <property type="term" value="C:photosystem II"/>
    <property type="evidence" value="ECO:0007669"/>
    <property type="project" value="UniProtKB-KW"/>
</dbReference>
<dbReference type="GO" id="GO:0016168">
    <property type="term" value="F:chlorophyll binding"/>
    <property type="evidence" value="ECO:0007669"/>
    <property type="project" value="UniProtKB-UniRule"/>
</dbReference>
<dbReference type="GO" id="GO:0045156">
    <property type="term" value="F:electron transporter, transferring electrons within the cyclic electron transport pathway of photosynthesis activity"/>
    <property type="evidence" value="ECO:0007669"/>
    <property type="project" value="InterPro"/>
</dbReference>
<dbReference type="GO" id="GO:0005506">
    <property type="term" value="F:iron ion binding"/>
    <property type="evidence" value="ECO:0007669"/>
    <property type="project" value="UniProtKB-UniRule"/>
</dbReference>
<dbReference type="GO" id="GO:0010242">
    <property type="term" value="F:oxygen evolving activity"/>
    <property type="evidence" value="ECO:0007669"/>
    <property type="project" value="UniProtKB-EC"/>
</dbReference>
<dbReference type="GO" id="GO:0009772">
    <property type="term" value="P:photosynthetic electron transport in photosystem II"/>
    <property type="evidence" value="ECO:0007669"/>
    <property type="project" value="InterPro"/>
</dbReference>
<dbReference type="CDD" id="cd09288">
    <property type="entry name" value="Photosystem-II_D2"/>
    <property type="match status" value="1"/>
</dbReference>
<dbReference type="FunFam" id="1.20.85.10:FF:000001">
    <property type="entry name" value="photosystem II D2 protein-like"/>
    <property type="match status" value="1"/>
</dbReference>
<dbReference type="Gene3D" id="1.20.85.10">
    <property type="entry name" value="Photosystem II protein D1-like"/>
    <property type="match status" value="1"/>
</dbReference>
<dbReference type="HAMAP" id="MF_01383">
    <property type="entry name" value="PSII_PsbD_D2"/>
    <property type="match status" value="1"/>
</dbReference>
<dbReference type="InterPro" id="IPR055266">
    <property type="entry name" value="D1/D2"/>
</dbReference>
<dbReference type="InterPro" id="IPR036854">
    <property type="entry name" value="Photo_II_D1/D2_sf"/>
</dbReference>
<dbReference type="InterPro" id="IPR000484">
    <property type="entry name" value="Photo_RC_L/M"/>
</dbReference>
<dbReference type="InterPro" id="IPR055265">
    <property type="entry name" value="Photo_RC_L/M_CS"/>
</dbReference>
<dbReference type="InterPro" id="IPR005868">
    <property type="entry name" value="PSII_PsbD/D2"/>
</dbReference>
<dbReference type="NCBIfam" id="TIGR01152">
    <property type="entry name" value="psbD"/>
    <property type="match status" value="1"/>
</dbReference>
<dbReference type="PANTHER" id="PTHR33149:SF12">
    <property type="entry name" value="PHOTOSYSTEM II D2 PROTEIN"/>
    <property type="match status" value="1"/>
</dbReference>
<dbReference type="PANTHER" id="PTHR33149">
    <property type="entry name" value="PHOTOSYSTEM II PROTEIN D1"/>
    <property type="match status" value="1"/>
</dbReference>
<dbReference type="Pfam" id="PF00124">
    <property type="entry name" value="Photo_RC"/>
    <property type="match status" value="1"/>
</dbReference>
<dbReference type="PRINTS" id="PR00256">
    <property type="entry name" value="REACTNCENTRE"/>
</dbReference>
<dbReference type="SUPFAM" id="SSF81483">
    <property type="entry name" value="Bacterial photosystem II reaction centre, L and M subunits"/>
    <property type="match status" value="1"/>
</dbReference>
<dbReference type="PROSITE" id="PS00244">
    <property type="entry name" value="REACTION_CENTER"/>
    <property type="match status" value="1"/>
</dbReference>
<name>PSBD_DIOEL</name>
<feature type="initiator methionine" description="Removed" evidence="1">
    <location>
        <position position="1"/>
    </location>
</feature>
<feature type="chain" id="PRO_0000359648" description="Photosystem II D2 protein">
    <location>
        <begin position="2"/>
        <end position="353"/>
    </location>
</feature>
<feature type="transmembrane region" description="Helical" evidence="2">
    <location>
        <begin position="41"/>
        <end position="61"/>
    </location>
</feature>
<feature type="transmembrane region" description="Helical" evidence="2">
    <location>
        <begin position="125"/>
        <end position="141"/>
    </location>
</feature>
<feature type="transmembrane region" description="Helical" evidence="2">
    <location>
        <begin position="153"/>
        <end position="166"/>
    </location>
</feature>
<feature type="transmembrane region" description="Helical" evidence="2">
    <location>
        <begin position="208"/>
        <end position="228"/>
    </location>
</feature>
<feature type="transmembrane region" description="Helical" evidence="2">
    <location>
        <begin position="279"/>
        <end position="295"/>
    </location>
</feature>
<feature type="binding site" description="axial binding residue" evidence="2">
    <location>
        <position position="118"/>
    </location>
    <ligand>
        <name>chlorophyll a</name>
        <dbReference type="ChEBI" id="CHEBI:58416"/>
        <label>ChlzD2</label>
    </ligand>
    <ligandPart>
        <name>Mg</name>
        <dbReference type="ChEBI" id="CHEBI:25107"/>
    </ligandPart>
</feature>
<feature type="binding site" evidence="2">
    <location>
        <position position="130"/>
    </location>
    <ligand>
        <name>pheophytin a</name>
        <dbReference type="ChEBI" id="CHEBI:136840"/>
        <label>D2</label>
    </ligand>
</feature>
<feature type="binding site" evidence="2">
    <location>
        <position position="143"/>
    </location>
    <ligand>
        <name>pheophytin a</name>
        <dbReference type="ChEBI" id="CHEBI:136840"/>
        <label>D2</label>
    </ligand>
</feature>
<feature type="binding site" description="axial binding residue" evidence="2">
    <location>
        <position position="198"/>
    </location>
    <ligand>
        <name>chlorophyll a</name>
        <dbReference type="ChEBI" id="CHEBI:58416"/>
        <label>PD2</label>
    </ligand>
    <ligandPart>
        <name>Mg</name>
        <dbReference type="ChEBI" id="CHEBI:25107"/>
    </ligandPart>
</feature>
<feature type="binding site" evidence="2">
    <location>
        <position position="215"/>
    </location>
    <ligand>
        <name>a plastoquinone</name>
        <dbReference type="ChEBI" id="CHEBI:17757"/>
        <label>Q(A)</label>
    </ligand>
</feature>
<feature type="binding site" evidence="2">
    <location>
        <position position="215"/>
    </location>
    <ligand>
        <name>Fe cation</name>
        <dbReference type="ChEBI" id="CHEBI:24875"/>
        <note>ligand shared with heterodimeric partner</note>
    </ligand>
</feature>
<feature type="binding site" evidence="2">
    <location>
        <position position="262"/>
    </location>
    <ligand>
        <name>a plastoquinone</name>
        <dbReference type="ChEBI" id="CHEBI:17757"/>
        <label>Q(A)</label>
    </ligand>
</feature>
<feature type="binding site" evidence="2">
    <location>
        <position position="269"/>
    </location>
    <ligand>
        <name>Fe cation</name>
        <dbReference type="ChEBI" id="CHEBI:24875"/>
        <note>ligand shared with heterodimeric partner</note>
    </ligand>
</feature>
<feature type="modified residue" description="N-acetylthreonine" evidence="1">
    <location>
        <position position="2"/>
    </location>
</feature>
<feature type="modified residue" description="Phosphothreonine" evidence="1">
    <location>
        <position position="2"/>
    </location>
</feature>
<gene>
    <name evidence="2" type="primary">psbD</name>
</gene>
<accession>A6MMK2</accession>
<sequence>MTIAAGRFTKEENDLFDIMDDWLRRDRFVFVGWSGLLLFPCAYFALGGWFTGTTFVTSWYTHGLASSYLEGCNFLTAAVSTPANSLAHSLLLLWGPEAQGDFTRWCQLGGLWTFVALHGAFGLIGFMLRQFELARSVQLRPYNAIAFSAPIAVFVSVFLIYPLGQSGWFFAPSFGVAAIFRFILFFQGFHNWTLNPFHMMGVAGVLGAALLCAIHGATVENTLFEDGDGANTFRAFNPTQAEETYSMVTANRFWSQIFGVAFSNKRWLHFFMLFVPVTGLWMSALGVVGLALNLRAYDFVSQEIRAAEDPEFETFYTKNILLNEGIRAWMAAQDQPHENLIFPEEVLPRGNAL</sequence>
<geneLocation type="chloroplast"/>
<protein>
    <recommendedName>
        <fullName evidence="2">Photosystem II D2 protein</fullName>
        <shortName evidence="2">PSII D2 protein</shortName>
        <ecNumber evidence="2">1.10.3.9</ecNumber>
    </recommendedName>
    <alternativeName>
        <fullName evidence="2">Photosystem Q(A) protein</fullName>
    </alternativeName>
</protein>
<keyword id="KW-0007">Acetylation</keyword>
<keyword id="KW-0148">Chlorophyll</keyword>
<keyword id="KW-0150">Chloroplast</keyword>
<keyword id="KW-0157">Chromophore</keyword>
<keyword id="KW-0249">Electron transport</keyword>
<keyword id="KW-0408">Iron</keyword>
<keyword id="KW-0460">Magnesium</keyword>
<keyword id="KW-0472">Membrane</keyword>
<keyword id="KW-0479">Metal-binding</keyword>
<keyword id="KW-0560">Oxidoreductase</keyword>
<keyword id="KW-0597">Phosphoprotein</keyword>
<keyword id="KW-0602">Photosynthesis</keyword>
<keyword id="KW-0604">Photosystem II</keyword>
<keyword id="KW-0934">Plastid</keyword>
<keyword id="KW-0793">Thylakoid</keyword>
<keyword id="KW-0812">Transmembrane</keyword>
<keyword id="KW-1133">Transmembrane helix</keyword>
<keyword id="KW-0813">Transport</keyword>
<comment type="function">
    <text evidence="2">Photosystem II (PSII) is a light-driven water:plastoquinone oxidoreductase that uses light energy to abstract electrons from H(2)O, generating O(2) and a proton gradient subsequently used for ATP formation. It consists of a core antenna complex that captures photons, and an electron transfer chain that converts photonic excitation into a charge separation. The D1/D2 (PsbA/PsbD) reaction center heterodimer binds P680, the primary electron donor of PSII as well as several subsequent electron acceptors. D2 is needed for assembly of a stable PSII complex.</text>
</comment>
<comment type="catalytic activity">
    <reaction evidence="2">
        <text>2 a plastoquinone + 4 hnu + 2 H2O = 2 a plastoquinol + O2</text>
        <dbReference type="Rhea" id="RHEA:36359"/>
        <dbReference type="Rhea" id="RHEA-COMP:9561"/>
        <dbReference type="Rhea" id="RHEA-COMP:9562"/>
        <dbReference type="ChEBI" id="CHEBI:15377"/>
        <dbReference type="ChEBI" id="CHEBI:15379"/>
        <dbReference type="ChEBI" id="CHEBI:17757"/>
        <dbReference type="ChEBI" id="CHEBI:30212"/>
        <dbReference type="ChEBI" id="CHEBI:62192"/>
        <dbReference type="EC" id="1.10.3.9"/>
    </reaction>
</comment>
<comment type="cofactor">
    <text evidence="2">The D1/D2 heterodimer binds P680, chlorophylls that are the primary electron donor of PSII, and subsequent electron acceptors. It shares a non-heme iron and each subunit binds pheophytin, quinone, additional chlorophylls, carotenoids and lipids. There is also a Cl(-1) ion associated with D1 and D2, which is required for oxygen evolution. The PSII complex binds additional chlorophylls, carotenoids and specific lipids.</text>
</comment>
<comment type="subunit">
    <text evidence="2">PSII is composed of 1 copy each of membrane proteins PsbA, PsbB, PsbC, PsbD, PsbE, PsbF, PsbH, PsbI, PsbJ, PsbK, PsbL, PsbM, PsbT, PsbX, PsbY, PsbZ, Psb30/Ycf12, at least 3 peripheral proteins of the oxygen-evolving complex and a large number of cofactors. It forms dimeric complexes.</text>
</comment>
<comment type="subcellular location">
    <subcellularLocation>
        <location evidence="2">Plastid</location>
        <location evidence="2">Chloroplast thylakoid membrane</location>
        <topology evidence="2">Multi-pass membrane protein</topology>
    </subcellularLocation>
</comment>
<comment type="miscellaneous">
    <text evidence="2">2 of the reaction center chlorophylls (ChlD1 and ChlD2) are entirely coordinated by water.</text>
</comment>
<comment type="similarity">
    <text evidence="2">Belongs to the reaction center PufL/M/PsbA/D family.</text>
</comment>
<evidence type="ECO:0000250" key="1">
    <source>
        <dbReference type="UniProtKB" id="P56761"/>
    </source>
</evidence>
<evidence type="ECO:0000255" key="2">
    <source>
        <dbReference type="HAMAP-Rule" id="MF_01383"/>
    </source>
</evidence>
<proteinExistence type="inferred from homology"/>